<gene>
    <name evidence="1" type="primary">queC</name>
    <name type="ordered locus">COXBURSA331_A2202</name>
</gene>
<reference key="1">
    <citation type="submission" date="2007-11" db="EMBL/GenBank/DDBJ databases">
        <title>Genome sequencing of phylogenetically and phenotypically diverse Coxiella burnetii isolates.</title>
        <authorList>
            <person name="Seshadri R."/>
            <person name="Samuel J.E."/>
        </authorList>
    </citation>
    <scope>NUCLEOTIDE SEQUENCE [LARGE SCALE GENOMIC DNA]</scope>
    <source>
        <strain>RSA 331 / Henzerling II</strain>
    </source>
</reference>
<accession>A9NBS5</accession>
<dbReference type="EC" id="6.3.4.20" evidence="1"/>
<dbReference type="EMBL" id="CP000890">
    <property type="protein sequence ID" value="ABX78287.1"/>
    <property type="molecule type" value="Genomic_DNA"/>
</dbReference>
<dbReference type="RefSeq" id="WP_012220891.1">
    <property type="nucleotide sequence ID" value="NC_010117.1"/>
</dbReference>
<dbReference type="SMR" id="A9NBS5"/>
<dbReference type="KEGG" id="cbs:COXBURSA331_A2202"/>
<dbReference type="HOGENOM" id="CLU_081854_1_0_6"/>
<dbReference type="UniPathway" id="UPA00391"/>
<dbReference type="GO" id="GO:0005524">
    <property type="term" value="F:ATP binding"/>
    <property type="evidence" value="ECO:0007669"/>
    <property type="project" value="UniProtKB-UniRule"/>
</dbReference>
<dbReference type="GO" id="GO:0016879">
    <property type="term" value="F:ligase activity, forming carbon-nitrogen bonds"/>
    <property type="evidence" value="ECO:0007669"/>
    <property type="project" value="UniProtKB-UniRule"/>
</dbReference>
<dbReference type="GO" id="GO:0008270">
    <property type="term" value="F:zinc ion binding"/>
    <property type="evidence" value="ECO:0007669"/>
    <property type="project" value="UniProtKB-UniRule"/>
</dbReference>
<dbReference type="GO" id="GO:0008616">
    <property type="term" value="P:queuosine biosynthetic process"/>
    <property type="evidence" value="ECO:0007669"/>
    <property type="project" value="UniProtKB-UniRule"/>
</dbReference>
<dbReference type="CDD" id="cd01995">
    <property type="entry name" value="QueC-like"/>
    <property type="match status" value="1"/>
</dbReference>
<dbReference type="FunFam" id="3.40.50.620:FF:000131">
    <property type="entry name" value="7-cyano-7-deazaguanine synthase"/>
    <property type="match status" value="1"/>
</dbReference>
<dbReference type="Gene3D" id="3.40.50.620">
    <property type="entry name" value="HUPs"/>
    <property type="match status" value="1"/>
</dbReference>
<dbReference type="HAMAP" id="MF_01633">
    <property type="entry name" value="QueC"/>
    <property type="match status" value="1"/>
</dbReference>
<dbReference type="InterPro" id="IPR018317">
    <property type="entry name" value="QueC"/>
</dbReference>
<dbReference type="InterPro" id="IPR014729">
    <property type="entry name" value="Rossmann-like_a/b/a_fold"/>
</dbReference>
<dbReference type="NCBIfam" id="TIGR00364">
    <property type="entry name" value="7-cyano-7-deazaguanine synthase QueC"/>
    <property type="match status" value="1"/>
</dbReference>
<dbReference type="PANTHER" id="PTHR42914">
    <property type="entry name" value="7-CYANO-7-DEAZAGUANINE SYNTHASE"/>
    <property type="match status" value="1"/>
</dbReference>
<dbReference type="PANTHER" id="PTHR42914:SF1">
    <property type="entry name" value="7-CYANO-7-DEAZAGUANINE SYNTHASE"/>
    <property type="match status" value="1"/>
</dbReference>
<dbReference type="Pfam" id="PF06508">
    <property type="entry name" value="QueC"/>
    <property type="match status" value="1"/>
</dbReference>
<dbReference type="PIRSF" id="PIRSF006293">
    <property type="entry name" value="ExsB"/>
    <property type="match status" value="1"/>
</dbReference>
<dbReference type="SUPFAM" id="SSF52402">
    <property type="entry name" value="Adenine nucleotide alpha hydrolases-like"/>
    <property type="match status" value="1"/>
</dbReference>
<name>QUEC_COXBR</name>
<keyword id="KW-0067">ATP-binding</keyword>
<keyword id="KW-0436">Ligase</keyword>
<keyword id="KW-0479">Metal-binding</keyword>
<keyword id="KW-0547">Nucleotide-binding</keyword>
<keyword id="KW-0671">Queuosine biosynthesis</keyword>
<keyword id="KW-0862">Zinc</keyword>
<evidence type="ECO:0000255" key="1">
    <source>
        <dbReference type="HAMAP-Rule" id="MF_01633"/>
    </source>
</evidence>
<feature type="chain" id="PRO_1000088151" description="7-cyano-7-deazaguanine synthase">
    <location>
        <begin position="1"/>
        <end position="226"/>
    </location>
</feature>
<feature type="binding site" evidence="1">
    <location>
        <begin position="8"/>
        <end position="18"/>
    </location>
    <ligand>
        <name>ATP</name>
        <dbReference type="ChEBI" id="CHEBI:30616"/>
    </ligand>
</feature>
<feature type="binding site" evidence="1">
    <location>
        <position position="188"/>
    </location>
    <ligand>
        <name>Zn(2+)</name>
        <dbReference type="ChEBI" id="CHEBI:29105"/>
    </ligand>
</feature>
<feature type="binding site" evidence="1">
    <location>
        <position position="198"/>
    </location>
    <ligand>
        <name>Zn(2+)</name>
        <dbReference type="ChEBI" id="CHEBI:29105"/>
    </ligand>
</feature>
<feature type="binding site" evidence="1">
    <location>
        <position position="201"/>
    </location>
    <ligand>
        <name>Zn(2+)</name>
        <dbReference type="ChEBI" id="CHEBI:29105"/>
    </ligand>
</feature>
<feature type="binding site" evidence="1">
    <location>
        <position position="204"/>
    </location>
    <ligand>
        <name>Zn(2+)</name>
        <dbReference type="ChEBI" id="CHEBI:29105"/>
    </ligand>
</feature>
<protein>
    <recommendedName>
        <fullName evidence="1">7-cyano-7-deazaguanine synthase</fullName>
        <ecNumber evidence="1">6.3.4.20</ecNumber>
    </recommendedName>
    <alternativeName>
        <fullName evidence="1">7-cyano-7-carbaguanine synthase</fullName>
    </alternativeName>
    <alternativeName>
        <fullName evidence="1">PreQ(0) synthase</fullName>
    </alternativeName>
    <alternativeName>
        <fullName evidence="1">Queuosine biosynthesis protein QueC</fullName>
    </alternativeName>
</protein>
<organism>
    <name type="scientific">Coxiella burnetii (strain RSA 331 / Henzerling II)</name>
    <dbReference type="NCBI Taxonomy" id="360115"/>
    <lineage>
        <taxon>Bacteria</taxon>
        <taxon>Pseudomonadati</taxon>
        <taxon>Pseudomonadota</taxon>
        <taxon>Gammaproteobacteria</taxon>
        <taxon>Legionellales</taxon>
        <taxon>Coxiellaceae</taxon>
        <taxon>Coxiella</taxon>
    </lineage>
</organism>
<comment type="function">
    <text evidence="1">Catalyzes the ATP-dependent conversion of 7-carboxy-7-deazaguanine (CDG) to 7-cyano-7-deazaguanine (preQ(0)).</text>
</comment>
<comment type="catalytic activity">
    <reaction evidence="1">
        <text>7-carboxy-7-deazaguanine + NH4(+) + ATP = 7-cyano-7-deazaguanine + ADP + phosphate + H2O + H(+)</text>
        <dbReference type="Rhea" id="RHEA:27982"/>
        <dbReference type="ChEBI" id="CHEBI:15377"/>
        <dbReference type="ChEBI" id="CHEBI:15378"/>
        <dbReference type="ChEBI" id="CHEBI:28938"/>
        <dbReference type="ChEBI" id="CHEBI:30616"/>
        <dbReference type="ChEBI" id="CHEBI:43474"/>
        <dbReference type="ChEBI" id="CHEBI:45075"/>
        <dbReference type="ChEBI" id="CHEBI:61036"/>
        <dbReference type="ChEBI" id="CHEBI:456216"/>
        <dbReference type="EC" id="6.3.4.20"/>
    </reaction>
</comment>
<comment type="cofactor">
    <cofactor evidence="1">
        <name>Zn(2+)</name>
        <dbReference type="ChEBI" id="CHEBI:29105"/>
    </cofactor>
    <text evidence="1">Binds 1 zinc ion per subunit.</text>
</comment>
<comment type="pathway">
    <text evidence="1">Purine metabolism; 7-cyano-7-deazaguanine biosynthesis.</text>
</comment>
<comment type="similarity">
    <text evidence="1">Belongs to the QueC family.</text>
</comment>
<proteinExistence type="inferred from homology"/>
<sequence>MKKAVILISGGLDSTTCLAVAKSKGFSCYALSFDYGQKHHSELVAAEKIAAHFNVVRHEVVTLSIGKLGGSALTDNSLDVPDYGGNESIPITYVPARNTIFLSIALGWAEILDAESILIGASAIDYSGYPDCRPEYIAAFQNLANLATKRGIEGHSIKIEAPLIHLSKAETIKLGYSLGVDYSMTVSCYRANEEGLACGYCDSCELRKKGFKEAEIKDPTQYITKV</sequence>